<name>FMT_POLAQ</name>
<evidence type="ECO:0000255" key="1">
    <source>
        <dbReference type="HAMAP-Rule" id="MF_00182"/>
    </source>
</evidence>
<reference key="1">
    <citation type="journal article" date="2012" name="Stand. Genomic Sci.">
        <title>Complete genome sequence of Polynucleobacter necessarius subsp. asymbioticus type strain (QLW-P1DMWA-1(T)).</title>
        <authorList>
            <person name="Meincke L."/>
            <person name="Copeland A."/>
            <person name="Lapidus A."/>
            <person name="Lucas S."/>
            <person name="Berry K.W."/>
            <person name="Del Rio T.G."/>
            <person name="Hammon N."/>
            <person name="Dalin E."/>
            <person name="Tice H."/>
            <person name="Pitluck S."/>
            <person name="Richardson P."/>
            <person name="Bruce D."/>
            <person name="Goodwin L."/>
            <person name="Han C."/>
            <person name="Tapia R."/>
            <person name="Detter J.C."/>
            <person name="Schmutz J."/>
            <person name="Brettin T."/>
            <person name="Larimer F."/>
            <person name="Land M."/>
            <person name="Hauser L."/>
            <person name="Kyrpides N.C."/>
            <person name="Ivanova N."/>
            <person name="Goker M."/>
            <person name="Woyke T."/>
            <person name="Wu Q.L."/>
            <person name="Pockl M."/>
            <person name="Hahn M.W."/>
            <person name="Klenk H.P."/>
        </authorList>
    </citation>
    <scope>NUCLEOTIDE SEQUENCE [LARGE SCALE GENOMIC DNA]</scope>
    <source>
        <strain>DSM 18221 / CIP 109841 / QLW-P1DMWA-1</strain>
    </source>
</reference>
<keyword id="KW-0648">Protein biosynthesis</keyword>
<keyword id="KW-1185">Reference proteome</keyword>
<keyword id="KW-0808">Transferase</keyword>
<gene>
    <name evidence="1" type="primary">fmt</name>
    <name type="ordered locus">Pnuc_2078</name>
</gene>
<accession>A4T0M5</accession>
<comment type="function">
    <text evidence="1">Attaches a formyl group to the free amino group of methionyl-tRNA(fMet). The formyl group appears to play a dual role in the initiator identity of N-formylmethionyl-tRNA by promoting its recognition by IF2 and preventing the misappropriation of this tRNA by the elongation apparatus.</text>
</comment>
<comment type="catalytic activity">
    <reaction evidence="1">
        <text>L-methionyl-tRNA(fMet) + (6R)-10-formyltetrahydrofolate = N-formyl-L-methionyl-tRNA(fMet) + (6S)-5,6,7,8-tetrahydrofolate + H(+)</text>
        <dbReference type="Rhea" id="RHEA:24380"/>
        <dbReference type="Rhea" id="RHEA-COMP:9952"/>
        <dbReference type="Rhea" id="RHEA-COMP:9953"/>
        <dbReference type="ChEBI" id="CHEBI:15378"/>
        <dbReference type="ChEBI" id="CHEBI:57453"/>
        <dbReference type="ChEBI" id="CHEBI:78530"/>
        <dbReference type="ChEBI" id="CHEBI:78844"/>
        <dbReference type="ChEBI" id="CHEBI:195366"/>
        <dbReference type="EC" id="2.1.2.9"/>
    </reaction>
</comment>
<comment type="similarity">
    <text evidence="1">Belongs to the Fmt family.</text>
</comment>
<protein>
    <recommendedName>
        <fullName evidence="1">Methionyl-tRNA formyltransferase</fullName>
        <ecNumber evidence="1">2.1.2.9</ecNumber>
    </recommendedName>
</protein>
<proteinExistence type="inferred from homology"/>
<sequence length="332" mass="35736">MKIVFAGTPEFAAQAMRAIHAAGHEIVLALTQPDRRAGRGMHLQASPVKEFALEKNIPVLQPETLRRNNKDPEKQQQAEDAYRALINTNFDAMVVVAYGLILPQEILDITQQAPRFGSFNIHASLLPRWRGAAPIQRAIEAGDAKTGVCIMQMEAGLDTGDVVLTADLAIASDETSSSLHDRLAALGAGLIVDALSLLQDGKGLSRTPQPALGVTYAEKILKAEADLDWSLSAREIDARIRAFNPFPGAISNLNAETIKLWKSRLADEDAYSEAGPIGAVIGFSEDGVFVRCGDGVIEILEAQKPGGKKMNAKTCLQSVDAPEKLLCFQTKA</sequence>
<dbReference type="EC" id="2.1.2.9" evidence="1"/>
<dbReference type="EMBL" id="CP000655">
    <property type="protein sequence ID" value="ABP35289.1"/>
    <property type="molecule type" value="Genomic_DNA"/>
</dbReference>
<dbReference type="RefSeq" id="WP_011903912.1">
    <property type="nucleotide sequence ID" value="NC_009379.1"/>
</dbReference>
<dbReference type="SMR" id="A4T0M5"/>
<dbReference type="GeneID" id="31482473"/>
<dbReference type="KEGG" id="pnu:Pnuc_2078"/>
<dbReference type="eggNOG" id="COG0223">
    <property type="taxonomic scope" value="Bacteria"/>
</dbReference>
<dbReference type="HOGENOM" id="CLU_033347_1_2_4"/>
<dbReference type="Proteomes" id="UP000000231">
    <property type="component" value="Chromosome"/>
</dbReference>
<dbReference type="GO" id="GO:0005829">
    <property type="term" value="C:cytosol"/>
    <property type="evidence" value="ECO:0007669"/>
    <property type="project" value="TreeGrafter"/>
</dbReference>
<dbReference type="GO" id="GO:0004479">
    <property type="term" value="F:methionyl-tRNA formyltransferase activity"/>
    <property type="evidence" value="ECO:0007669"/>
    <property type="project" value="UniProtKB-UniRule"/>
</dbReference>
<dbReference type="CDD" id="cd08646">
    <property type="entry name" value="FMT_core_Met-tRNA-FMT_N"/>
    <property type="match status" value="1"/>
</dbReference>
<dbReference type="CDD" id="cd08704">
    <property type="entry name" value="Met_tRNA_FMT_C"/>
    <property type="match status" value="1"/>
</dbReference>
<dbReference type="Gene3D" id="3.40.50.12230">
    <property type="match status" value="1"/>
</dbReference>
<dbReference type="HAMAP" id="MF_00182">
    <property type="entry name" value="Formyl_trans"/>
    <property type="match status" value="1"/>
</dbReference>
<dbReference type="InterPro" id="IPR005794">
    <property type="entry name" value="Fmt"/>
</dbReference>
<dbReference type="InterPro" id="IPR005793">
    <property type="entry name" value="Formyl_trans_C"/>
</dbReference>
<dbReference type="InterPro" id="IPR002376">
    <property type="entry name" value="Formyl_transf_N"/>
</dbReference>
<dbReference type="InterPro" id="IPR036477">
    <property type="entry name" value="Formyl_transf_N_sf"/>
</dbReference>
<dbReference type="InterPro" id="IPR011034">
    <property type="entry name" value="Formyl_transferase-like_C_sf"/>
</dbReference>
<dbReference type="InterPro" id="IPR001555">
    <property type="entry name" value="GART_AS"/>
</dbReference>
<dbReference type="InterPro" id="IPR044135">
    <property type="entry name" value="Met-tRNA-FMT_C"/>
</dbReference>
<dbReference type="InterPro" id="IPR041711">
    <property type="entry name" value="Met-tRNA-FMT_N"/>
</dbReference>
<dbReference type="NCBIfam" id="TIGR00460">
    <property type="entry name" value="fmt"/>
    <property type="match status" value="1"/>
</dbReference>
<dbReference type="PANTHER" id="PTHR11138">
    <property type="entry name" value="METHIONYL-TRNA FORMYLTRANSFERASE"/>
    <property type="match status" value="1"/>
</dbReference>
<dbReference type="PANTHER" id="PTHR11138:SF5">
    <property type="entry name" value="METHIONYL-TRNA FORMYLTRANSFERASE, MITOCHONDRIAL"/>
    <property type="match status" value="1"/>
</dbReference>
<dbReference type="Pfam" id="PF02911">
    <property type="entry name" value="Formyl_trans_C"/>
    <property type="match status" value="1"/>
</dbReference>
<dbReference type="Pfam" id="PF00551">
    <property type="entry name" value="Formyl_trans_N"/>
    <property type="match status" value="1"/>
</dbReference>
<dbReference type="SUPFAM" id="SSF50486">
    <property type="entry name" value="FMT C-terminal domain-like"/>
    <property type="match status" value="1"/>
</dbReference>
<dbReference type="SUPFAM" id="SSF53328">
    <property type="entry name" value="Formyltransferase"/>
    <property type="match status" value="1"/>
</dbReference>
<dbReference type="PROSITE" id="PS00373">
    <property type="entry name" value="GART"/>
    <property type="match status" value="1"/>
</dbReference>
<organism>
    <name type="scientific">Polynucleobacter asymbioticus (strain DSM 18221 / CIP 109841 / QLW-P1DMWA-1)</name>
    <name type="common">Polynucleobacter necessarius subsp. asymbioticus</name>
    <dbReference type="NCBI Taxonomy" id="312153"/>
    <lineage>
        <taxon>Bacteria</taxon>
        <taxon>Pseudomonadati</taxon>
        <taxon>Pseudomonadota</taxon>
        <taxon>Betaproteobacteria</taxon>
        <taxon>Burkholderiales</taxon>
        <taxon>Burkholderiaceae</taxon>
        <taxon>Polynucleobacter</taxon>
    </lineage>
</organism>
<feature type="chain" id="PRO_1000077310" description="Methionyl-tRNA formyltransferase">
    <location>
        <begin position="1"/>
        <end position="332"/>
    </location>
</feature>
<feature type="binding site" evidence="1">
    <location>
        <begin position="124"/>
        <end position="127"/>
    </location>
    <ligand>
        <name>(6S)-5,6,7,8-tetrahydrofolate</name>
        <dbReference type="ChEBI" id="CHEBI:57453"/>
    </ligand>
</feature>